<protein>
    <recommendedName>
        <fullName evidence="1">Peptide deformylase</fullName>
        <shortName evidence="1">PDF</shortName>
        <ecNumber evidence="1">3.5.1.88</ecNumber>
    </recommendedName>
    <alternativeName>
        <fullName evidence="1">Polypeptide deformylase</fullName>
    </alternativeName>
</protein>
<feature type="chain" id="PRO_1000097320" description="Peptide deformylase">
    <location>
        <begin position="1"/>
        <end position="186"/>
    </location>
</feature>
<feature type="active site" evidence="1">
    <location>
        <position position="157"/>
    </location>
</feature>
<feature type="binding site" evidence="1">
    <location>
        <position position="113"/>
    </location>
    <ligand>
        <name>Fe cation</name>
        <dbReference type="ChEBI" id="CHEBI:24875"/>
    </ligand>
</feature>
<feature type="binding site" evidence="1">
    <location>
        <position position="156"/>
    </location>
    <ligand>
        <name>Fe cation</name>
        <dbReference type="ChEBI" id="CHEBI:24875"/>
    </ligand>
</feature>
<feature type="binding site" evidence="1">
    <location>
        <position position="160"/>
    </location>
    <ligand>
        <name>Fe cation</name>
        <dbReference type="ChEBI" id="CHEBI:24875"/>
    </ligand>
</feature>
<proteinExistence type="inferred from homology"/>
<accession>B2G6P1</accession>
<keyword id="KW-0378">Hydrolase</keyword>
<keyword id="KW-0408">Iron</keyword>
<keyword id="KW-0479">Metal-binding</keyword>
<keyword id="KW-0648">Protein biosynthesis</keyword>
<organism>
    <name type="scientific">Limosilactobacillus reuteri subsp. reuteri (strain JCM 1112)</name>
    <name type="common">Lactobacillus reuteri</name>
    <dbReference type="NCBI Taxonomy" id="557433"/>
    <lineage>
        <taxon>Bacteria</taxon>
        <taxon>Bacillati</taxon>
        <taxon>Bacillota</taxon>
        <taxon>Bacilli</taxon>
        <taxon>Lactobacillales</taxon>
        <taxon>Lactobacillaceae</taxon>
        <taxon>Limosilactobacillus</taxon>
    </lineage>
</organism>
<reference key="1">
    <citation type="journal article" date="2008" name="DNA Res.">
        <title>Comparative genome analysis of Lactobacillus reuteri and Lactobacillus fermentum reveal a genomic island for reuterin and cobalamin production.</title>
        <authorList>
            <person name="Morita H."/>
            <person name="Toh H."/>
            <person name="Fukuda S."/>
            <person name="Horikawa H."/>
            <person name="Oshima K."/>
            <person name="Suzuki T."/>
            <person name="Murakami M."/>
            <person name="Hisamatsu S."/>
            <person name="Kato Y."/>
            <person name="Takizawa T."/>
            <person name="Fukuoka H."/>
            <person name="Yoshimura T."/>
            <person name="Itoh K."/>
            <person name="O'Sullivan D.J."/>
            <person name="McKay L.L."/>
            <person name="Ohno H."/>
            <person name="Kikuchi J."/>
            <person name="Masaoka T."/>
            <person name="Hattori M."/>
        </authorList>
    </citation>
    <scope>NUCLEOTIDE SEQUENCE [LARGE SCALE GENOMIC DNA]</scope>
    <source>
        <strain>JCM 1112</strain>
    </source>
</reference>
<name>DEF_LIMRJ</name>
<evidence type="ECO:0000255" key="1">
    <source>
        <dbReference type="HAMAP-Rule" id="MF_00163"/>
    </source>
</evidence>
<dbReference type="EC" id="3.5.1.88" evidence="1"/>
<dbReference type="EMBL" id="AP007281">
    <property type="protein sequence ID" value="BAG25123.1"/>
    <property type="molecule type" value="Genomic_DNA"/>
</dbReference>
<dbReference type="RefSeq" id="WP_003668269.1">
    <property type="nucleotide sequence ID" value="NC_010609.1"/>
</dbReference>
<dbReference type="SMR" id="B2G6P1"/>
<dbReference type="KEGG" id="lrf:LAR_0607"/>
<dbReference type="HOGENOM" id="CLU_061901_4_0_9"/>
<dbReference type="GO" id="GO:0046872">
    <property type="term" value="F:metal ion binding"/>
    <property type="evidence" value="ECO:0007669"/>
    <property type="project" value="UniProtKB-KW"/>
</dbReference>
<dbReference type="GO" id="GO:0042586">
    <property type="term" value="F:peptide deformylase activity"/>
    <property type="evidence" value="ECO:0007669"/>
    <property type="project" value="UniProtKB-UniRule"/>
</dbReference>
<dbReference type="GO" id="GO:0043686">
    <property type="term" value="P:co-translational protein modification"/>
    <property type="evidence" value="ECO:0007669"/>
    <property type="project" value="TreeGrafter"/>
</dbReference>
<dbReference type="GO" id="GO:0006412">
    <property type="term" value="P:translation"/>
    <property type="evidence" value="ECO:0007669"/>
    <property type="project" value="UniProtKB-UniRule"/>
</dbReference>
<dbReference type="CDD" id="cd00487">
    <property type="entry name" value="Pep_deformylase"/>
    <property type="match status" value="1"/>
</dbReference>
<dbReference type="FunFam" id="3.90.45.10:FF:000002">
    <property type="entry name" value="Peptide deformylase"/>
    <property type="match status" value="1"/>
</dbReference>
<dbReference type="Gene3D" id="3.90.45.10">
    <property type="entry name" value="Peptide deformylase"/>
    <property type="match status" value="1"/>
</dbReference>
<dbReference type="HAMAP" id="MF_00163">
    <property type="entry name" value="Pep_deformylase"/>
    <property type="match status" value="1"/>
</dbReference>
<dbReference type="InterPro" id="IPR023635">
    <property type="entry name" value="Peptide_deformylase"/>
</dbReference>
<dbReference type="InterPro" id="IPR036821">
    <property type="entry name" value="Peptide_deformylase_sf"/>
</dbReference>
<dbReference type="NCBIfam" id="TIGR00079">
    <property type="entry name" value="pept_deformyl"/>
    <property type="match status" value="1"/>
</dbReference>
<dbReference type="PANTHER" id="PTHR10458">
    <property type="entry name" value="PEPTIDE DEFORMYLASE"/>
    <property type="match status" value="1"/>
</dbReference>
<dbReference type="PANTHER" id="PTHR10458:SF8">
    <property type="entry name" value="PEPTIDE DEFORMYLASE 2"/>
    <property type="match status" value="1"/>
</dbReference>
<dbReference type="Pfam" id="PF01327">
    <property type="entry name" value="Pep_deformylase"/>
    <property type="match status" value="1"/>
</dbReference>
<dbReference type="PIRSF" id="PIRSF004749">
    <property type="entry name" value="Pep_def"/>
    <property type="match status" value="1"/>
</dbReference>
<dbReference type="PRINTS" id="PR01576">
    <property type="entry name" value="PDEFORMYLASE"/>
</dbReference>
<dbReference type="SUPFAM" id="SSF56420">
    <property type="entry name" value="Peptide deformylase"/>
    <property type="match status" value="1"/>
</dbReference>
<sequence>MYLMKDITRDGNPVLRKRAAKVSFPLSDEDQKLAKDMMKYLEVSQDPELCKKYKLRAGVGLAAPQVGVSKQMAAVLVPAPDEDEKPLFKDVIINPVIVSESVQYGALTEGEGCLSVDKDVPGYVPRHDRITLRYQDVNGETHKVRLKHYPAIVCQHEIDHLHGVLFYDHINKDQPFEAPADTVMIS</sequence>
<gene>
    <name evidence="1" type="primary">def</name>
    <name type="ordered locus">LAR_0607</name>
</gene>
<comment type="function">
    <text evidence="1">Removes the formyl group from the N-terminal Met of newly synthesized proteins. Requires at least a dipeptide for an efficient rate of reaction. N-terminal L-methionine is a prerequisite for activity but the enzyme has broad specificity at other positions.</text>
</comment>
<comment type="catalytic activity">
    <reaction evidence="1">
        <text>N-terminal N-formyl-L-methionyl-[peptide] + H2O = N-terminal L-methionyl-[peptide] + formate</text>
        <dbReference type="Rhea" id="RHEA:24420"/>
        <dbReference type="Rhea" id="RHEA-COMP:10639"/>
        <dbReference type="Rhea" id="RHEA-COMP:10640"/>
        <dbReference type="ChEBI" id="CHEBI:15377"/>
        <dbReference type="ChEBI" id="CHEBI:15740"/>
        <dbReference type="ChEBI" id="CHEBI:49298"/>
        <dbReference type="ChEBI" id="CHEBI:64731"/>
        <dbReference type="EC" id="3.5.1.88"/>
    </reaction>
</comment>
<comment type="cofactor">
    <cofactor evidence="1">
        <name>Fe(2+)</name>
        <dbReference type="ChEBI" id="CHEBI:29033"/>
    </cofactor>
    <text evidence="1">Binds 1 Fe(2+) ion.</text>
</comment>
<comment type="similarity">
    <text evidence="1">Belongs to the polypeptide deformylase family.</text>
</comment>